<accession>Q9KU46</accession>
<evidence type="ECO:0000255" key="1">
    <source>
        <dbReference type="HAMAP-Rule" id="MF_00161"/>
    </source>
</evidence>
<proteinExistence type="inferred from homology"/>
<organism>
    <name type="scientific">Vibrio cholerae serotype O1 (strain ATCC 39315 / El Tor Inaba N16961)</name>
    <dbReference type="NCBI Taxonomy" id="243277"/>
    <lineage>
        <taxon>Bacteria</taxon>
        <taxon>Pseudomonadati</taxon>
        <taxon>Pseudomonadota</taxon>
        <taxon>Gammaproteobacteria</taxon>
        <taxon>Vibrionales</taxon>
        <taxon>Vibrionaceae</taxon>
        <taxon>Vibrio</taxon>
    </lineage>
</organism>
<comment type="function">
    <text evidence="1">This protein specifically catalyzes the removal of signal peptides from prolipoproteins.</text>
</comment>
<comment type="catalytic activity">
    <reaction evidence="1">
        <text>Release of signal peptides from bacterial membrane prolipoproteins. Hydrolyzes -Xaa-Yaa-Zaa-|-(S,diacylglyceryl)Cys-, in which Xaa is hydrophobic (preferably Leu), and Yaa (Ala or Ser) and Zaa (Gly or Ala) have small, neutral side chains.</text>
        <dbReference type="EC" id="3.4.23.36"/>
    </reaction>
</comment>
<comment type="pathway">
    <text evidence="1">Protein modification; lipoprotein biosynthesis (signal peptide cleavage).</text>
</comment>
<comment type="subcellular location">
    <subcellularLocation>
        <location evidence="1">Cell inner membrane</location>
        <topology evidence="1">Multi-pass membrane protein</topology>
    </subcellularLocation>
</comment>
<comment type="similarity">
    <text evidence="1">Belongs to the peptidase A8 family.</text>
</comment>
<gene>
    <name evidence="1" type="primary">lspA</name>
    <name type="ordered locus">VC_0683</name>
</gene>
<name>LSPA_VIBCH</name>
<reference key="1">
    <citation type="journal article" date="2000" name="Nature">
        <title>DNA sequence of both chromosomes of the cholera pathogen Vibrio cholerae.</title>
        <authorList>
            <person name="Heidelberg J.F."/>
            <person name="Eisen J.A."/>
            <person name="Nelson W.C."/>
            <person name="Clayton R.A."/>
            <person name="Gwinn M.L."/>
            <person name="Dodson R.J."/>
            <person name="Haft D.H."/>
            <person name="Hickey E.K."/>
            <person name="Peterson J.D."/>
            <person name="Umayam L.A."/>
            <person name="Gill S.R."/>
            <person name="Nelson K.E."/>
            <person name="Read T.D."/>
            <person name="Tettelin H."/>
            <person name="Richardson D.L."/>
            <person name="Ermolaeva M.D."/>
            <person name="Vamathevan J.J."/>
            <person name="Bass S."/>
            <person name="Qin H."/>
            <person name="Dragoi I."/>
            <person name="Sellers P."/>
            <person name="McDonald L.A."/>
            <person name="Utterback T.R."/>
            <person name="Fleischmann R.D."/>
            <person name="Nierman W.C."/>
            <person name="White O."/>
            <person name="Salzberg S.L."/>
            <person name="Smith H.O."/>
            <person name="Colwell R.R."/>
            <person name="Mekalanos J.J."/>
            <person name="Venter J.C."/>
            <person name="Fraser C.M."/>
        </authorList>
    </citation>
    <scope>NUCLEOTIDE SEQUENCE [LARGE SCALE GENOMIC DNA]</scope>
    <source>
        <strain>ATCC 39315 / El Tor Inaba N16961</strain>
    </source>
</reference>
<feature type="chain" id="PRO_0000178830" description="Lipoprotein signal peptidase">
    <location>
        <begin position="1"/>
        <end position="171"/>
    </location>
</feature>
<feature type="transmembrane region" description="Helical" evidence="1">
    <location>
        <begin position="15"/>
        <end position="35"/>
    </location>
</feature>
<feature type="transmembrane region" description="Helical" evidence="1">
    <location>
        <begin position="47"/>
        <end position="67"/>
    </location>
</feature>
<feature type="transmembrane region" description="Helical" evidence="1">
    <location>
        <begin position="72"/>
        <end position="92"/>
    </location>
</feature>
<feature type="transmembrane region" description="Helical" evidence="1">
    <location>
        <begin position="107"/>
        <end position="127"/>
    </location>
</feature>
<feature type="transmembrane region" description="Helical" evidence="1">
    <location>
        <begin position="141"/>
        <end position="161"/>
    </location>
</feature>
<feature type="active site" evidence="1">
    <location>
        <position position="128"/>
    </location>
</feature>
<feature type="active site" evidence="1">
    <location>
        <position position="146"/>
    </location>
</feature>
<sequence length="171" mass="19390">MSNSSLALKQSGLRWLWLALLVFIADITIKLIVMDNMGYGWANRIEVLPFFNLLYVHNYGAAFSFLSDQEGWQRWLFTGIAFVVTGMLAYWMRRLPASDKWNNIAYALIIGGAVGNVFDRIVHGFVVDYLDFYWGTYHWPAFNLADSTICIGAAMIILDGFRAKKSAPSQS</sequence>
<dbReference type="EC" id="3.4.23.36" evidence="1"/>
<dbReference type="EMBL" id="AE003852">
    <property type="protein sequence ID" value="AAF93848.1"/>
    <property type="molecule type" value="Genomic_DNA"/>
</dbReference>
<dbReference type="PIR" id="E82293">
    <property type="entry name" value="E82293"/>
</dbReference>
<dbReference type="RefSeq" id="NP_230332.1">
    <property type="nucleotide sequence ID" value="NC_002505.1"/>
</dbReference>
<dbReference type="RefSeq" id="WP_000071968.1">
    <property type="nucleotide sequence ID" value="NZ_LT906614.1"/>
</dbReference>
<dbReference type="SMR" id="Q9KU46"/>
<dbReference type="STRING" id="243277.VC_0683"/>
<dbReference type="MEROPS" id="A08.001"/>
<dbReference type="DNASU" id="2615472"/>
<dbReference type="EnsemblBacteria" id="AAF93848">
    <property type="protein sequence ID" value="AAF93848"/>
    <property type="gene ID" value="VC_0683"/>
</dbReference>
<dbReference type="KEGG" id="vch:VC_0683"/>
<dbReference type="PATRIC" id="fig|243277.26.peg.655"/>
<dbReference type="eggNOG" id="COG0597">
    <property type="taxonomic scope" value="Bacteria"/>
</dbReference>
<dbReference type="HOGENOM" id="CLU_083252_4_0_6"/>
<dbReference type="UniPathway" id="UPA00665"/>
<dbReference type="Proteomes" id="UP000000584">
    <property type="component" value="Chromosome 1"/>
</dbReference>
<dbReference type="GO" id="GO:0005886">
    <property type="term" value="C:plasma membrane"/>
    <property type="evidence" value="ECO:0000318"/>
    <property type="project" value="GO_Central"/>
</dbReference>
<dbReference type="GO" id="GO:0004190">
    <property type="term" value="F:aspartic-type endopeptidase activity"/>
    <property type="evidence" value="ECO:0007669"/>
    <property type="project" value="UniProtKB-UniRule"/>
</dbReference>
<dbReference type="GO" id="GO:0004175">
    <property type="term" value="F:endopeptidase activity"/>
    <property type="evidence" value="ECO:0000318"/>
    <property type="project" value="GO_Central"/>
</dbReference>
<dbReference type="GO" id="GO:0006508">
    <property type="term" value="P:proteolysis"/>
    <property type="evidence" value="ECO:0007669"/>
    <property type="project" value="UniProtKB-KW"/>
</dbReference>
<dbReference type="HAMAP" id="MF_00161">
    <property type="entry name" value="LspA"/>
    <property type="match status" value="1"/>
</dbReference>
<dbReference type="InterPro" id="IPR001872">
    <property type="entry name" value="Peptidase_A8"/>
</dbReference>
<dbReference type="NCBIfam" id="TIGR00077">
    <property type="entry name" value="lspA"/>
    <property type="match status" value="1"/>
</dbReference>
<dbReference type="PANTHER" id="PTHR33695">
    <property type="entry name" value="LIPOPROTEIN SIGNAL PEPTIDASE"/>
    <property type="match status" value="1"/>
</dbReference>
<dbReference type="PANTHER" id="PTHR33695:SF1">
    <property type="entry name" value="LIPOPROTEIN SIGNAL PEPTIDASE"/>
    <property type="match status" value="1"/>
</dbReference>
<dbReference type="Pfam" id="PF01252">
    <property type="entry name" value="Peptidase_A8"/>
    <property type="match status" value="1"/>
</dbReference>
<dbReference type="PRINTS" id="PR00781">
    <property type="entry name" value="LIPOSIGPTASE"/>
</dbReference>
<dbReference type="PROSITE" id="PS00855">
    <property type="entry name" value="SPASE_II"/>
    <property type="match status" value="1"/>
</dbReference>
<keyword id="KW-0064">Aspartyl protease</keyword>
<keyword id="KW-0997">Cell inner membrane</keyword>
<keyword id="KW-1003">Cell membrane</keyword>
<keyword id="KW-0378">Hydrolase</keyword>
<keyword id="KW-0472">Membrane</keyword>
<keyword id="KW-0645">Protease</keyword>
<keyword id="KW-1185">Reference proteome</keyword>
<keyword id="KW-0812">Transmembrane</keyword>
<keyword id="KW-1133">Transmembrane helix</keyword>
<protein>
    <recommendedName>
        <fullName evidence="1">Lipoprotein signal peptidase</fullName>
        <ecNumber evidence="1">3.4.23.36</ecNumber>
    </recommendedName>
    <alternativeName>
        <fullName evidence="1">Prolipoprotein signal peptidase</fullName>
    </alternativeName>
    <alternativeName>
        <fullName evidence="1">Signal peptidase II</fullName>
        <shortName evidence="1">SPase II</shortName>
    </alternativeName>
</protein>